<dbReference type="EC" id="2.7.1.30" evidence="1"/>
<dbReference type="EMBL" id="AL591985">
    <property type="protein sequence ID" value="CAC49535.1"/>
    <property type="molecule type" value="Genomic_DNA"/>
</dbReference>
<dbReference type="EMBL" id="AF080548">
    <property type="protein sequence ID" value="AAD12735.1"/>
    <property type="molecule type" value="Genomic_DNA"/>
</dbReference>
<dbReference type="PIR" id="G95983">
    <property type="entry name" value="G95983"/>
</dbReference>
<dbReference type="RefSeq" id="NP_437675.1">
    <property type="nucleotide sequence ID" value="NC_003078.1"/>
</dbReference>
<dbReference type="RefSeq" id="WP_010975967.1">
    <property type="nucleotide sequence ID" value="NC_003078.1"/>
</dbReference>
<dbReference type="PDB" id="4E1J">
    <property type="method" value="X-ray"/>
    <property type="resolution" value="2.33 A"/>
    <property type="chains" value="A/B/C/D=1-497"/>
</dbReference>
<dbReference type="PDBsum" id="4E1J"/>
<dbReference type="SMR" id="O86033"/>
<dbReference type="EnsemblBacteria" id="CAC49535">
    <property type="protein sequence ID" value="CAC49535"/>
    <property type="gene ID" value="SM_b21009"/>
</dbReference>
<dbReference type="KEGG" id="sme:SM_b21009"/>
<dbReference type="PATRIC" id="fig|266834.11.peg.6063"/>
<dbReference type="eggNOG" id="COG0554">
    <property type="taxonomic scope" value="Bacteria"/>
</dbReference>
<dbReference type="HOGENOM" id="CLU_009281_2_3_5"/>
<dbReference type="OrthoDB" id="9805576at2"/>
<dbReference type="UniPathway" id="UPA00618">
    <property type="reaction ID" value="UER00672"/>
</dbReference>
<dbReference type="EvolutionaryTrace" id="O86033"/>
<dbReference type="Proteomes" id="UP000001976">
    <property type="component" value="Plasmid pSymB"/>
</dbReference>
<dbReference type="GO" id="GO:0005829">
    <property type="term" value="C:cytosol"/>
    <property type="evidence" value="ECO:0007669"/>
    <property type="project" value="TreeGrafter"/>
</dbReference>
<dbReference type="GO" id="GO:0005524">
    <property type="term" value="F:ATP binding"/>
    <property type="evidence" value="ECO:0007669"/>
    <property type="project" value="UniProtKB-UniRule"/>
</dbReference>
<dbReference type="GO" id="GO:0004370">
    <property type="term" value="F:glycerol kinase activity"/>
    <property type="evidence" value="ECO:0000250"/>
    <property type="project" value="UniProtKB"/>
</dbReference>
<dbReference type="GO" id="GO:0019563">
    <property type="term" value="P:glycerol catabolic process"/>
    <property type="evidence" value="ECO:0007669"/>
    <property type="project" value="UniProtKB-UniRule"/>
</dbReference>
<dbReference type="GO" id="GO:0006071">
    <property type="term" value="P:glycerol metabolic process"/>
    <property type="evidence" value="ECO:0000250"/>
    <property type="project" value="UniProtKB"/>
</dbReference>
<dbReference type="GO" id="GO:0006072">
    <property type="term" value="P:glycerol-3-phosphate metabolic process"/>
    <property type="evidence" value="ECO:0007669"/>
    <property type="project" value="InterPro"/>
</dbReference>
<dbReference type="CDD" id="cd07786">
    <property type="entry name" value="FGGY_EcGK_like"/>
    <property type="match status" value="1"/>
</dbReference>
<dbReference type="FunFam" id="3.30.420.40:FF:000007">
    <property type="entry name" value="Glycerol kinase"/>
    <property type="match status" value="1"/>
</dbReference>
<dbReference type="FunFam" id="3.30.420.40:FF:000008">
    <property type="entry name" value="Glycerol kinase"/>
    <property type="match status" value="1"/>
</dbReference>
<dbReference type="Gene3D" id="3.30.420.40">
    <property type="match status" value="2"/>
</dbReference>
<dbReference type="HAMAP" id="MF_00186">
    <property type="entry name" value="Glycerol_kin"/>
    <property type="match status" value="1"/>
</dbReference>
<dbReference type="InterPro" id="IPR043129">
    <property type="entry name" value="ATPase_NBD"/>
</dbReference>
<dbReference type="InterPro" id="IPR000577">
    <property type="entry name" value="Carb_kinase_FGGY"/>
</dbReference>
<dbReference type="InterPro" id="IPR018483">
    <property type="entry name" value="Carb_kinase_FGGY_CS"/>
</dbReference>
<dbReference type="InterPro" id="IPR018485">
    <property type="entry name" value="FGGY_C"/>
</dbReference>
<dbReference type="InterPro" id="IPR018484">
    <property type="entry name" value="FGGY_N"/>
</dbReference>
<dbReference type="InterPro" id="IPR005999">
    <property type="entry name" value="Glycerol_kin"/>
</dbReference>
<dbReference type="NCBIfam" id="TIGR01311">
    <property type="entry name" value="glycerol_kin"/>
    <property type="match status" value="1"/>
</dbReference>
<dbReference type="NCBIfam" id="NF000756">
    <property type="entry name" value="PRK00047.1"/>
    <property type="match status" value="1"/>
</dbReference>
<dbReference type="PANTHER" id="PTHR10196:SF78">
    <property type="entry name" value="GLYCEROL KINASE"/>
    <property type="match status" value="1"/>
</dbReference>
<dbReference type="PANTHER" id="PTHR10196">
    <property type="entry name" value="SUGAR KINASE"/>
    <property type="match status" value="1"/>
</dbReference>
<dbReference type="Pfam" id="PF02782">
    <property type="entry name" value="FGGY_C"/>
    <property type="match status" value="1"/>
</dbReference>
<dbReference type="Pfam" id="PF00370">
    <property type="entry name" value="FGGY_N"/>
    <property type="match status" value="1"/>
</dbReference>
<dbReference type="PIRSF" id="PIRSF000538">
    <property type="entry name" value="GlpK"/>
    <property type="match status" value="1"/>
</dbReference>
<dbReference type="SUPFAM" id="SSF53067">
    <property type="entry name" value="Actin-like ATPase domain"/>
    <property type="match status" value="2"/>
</dbReference>
<dbReference type="PROSITE" id="PS00445">
    <property type="entry name" value="FGGY_KINASES_2"/>
    <property type="match status" value="1"/>
</dbReference>
<evidence type="ECO:0000255" key="1">
    <source>
        <dbReference type="HAMAP-Rule" id="MF_00186"/>
    </source>
</evidence>
<evidence type="ECO:0000269" key="2">
    <source ref="4"/>
</evidence>
<evidence type="ECO:0007744" key="3">
    <source>
        <dbReference type="PDB" id="4E1J"/>
    </source>
</evidence>
<evidence type="ECO:0007829" key="4">
    <source>
        <dbReference type="PDB" id="4E1J"/>
    </source>
</evidence>
<feature type="chain" id="PRO_0000059483" description="Glycerol kinase">
    <location>
        <begin position="1"/>
        <end position="497"/>
    </location>
</feature>
<feature type="binding site" evidence="1">
    <location>
        <position position="12"/>
    </location>
    <ligand>
        <name>ADP</name>
        <dbReference type="ChEBI" id="CHEBI:456216"/>
    </ligand>
</feature>
<feature type="binding site" evidence="1">
    <location>
        <position position="12"/>
    </location>
    <ligand>
        <name>ATP</name>
        <dbReference type="ChEBI" id="CHEBI:30616"/>
    </ligand>
</feature>
<feature type="binding site" evidence="1">
    <location>
        <position position="12"/>
    </location>
    <ligand>
        <name>sn-glycerol 3-phosphate</name>
        <dbReference type="ChEBI" id="CHEBI:57597"/>
    </ligand>
</feature>
<feature type="binding site" evidence="1">
    <location>
        <position position="13"/>
    </location>
    <ligand>
        <name>ATP</name>
        <dbReference type="ChEBI" id="CHEBI:30616"/>
    </ligand>
</feature>
<feature type="binding site" evidence="1">
    <location>
        <position position="14"/>
    </location>
    <ligand>
        <name>ATP</name>
        <dbReference type="ChEBI" id="CHEBI:30616"/>
    </ligand>
</feature>
<feature type="binding site" evidence="1">
    <location>
        <position position="16"/>
    </location>
    <ligand>
        <name>ADP</name>
        <dbReference type="ChEBI" id="CHEBI:456216"/>
    </ligand>
</feature>
<feature type="binding site" evidence="1 2 3">
    <location>
        <position position="82"/>
    </location>
    <ligand>
        <name>glycerol</name>
        <dbReference type="ChEBI" id="CHEBI:17754"/>
    </ligand>
</feature>
<feature type="binding site" evidence="1">
    <location>
        <position position="82"/>
    </location>
    <ligand>
        <name>sn-glycerol 3-phosphate</name>
        <dbReference type="ChEBI" id="CHEBI:57597"/>
    </ligand>
</feature>
<feature type="binding site" evidence="1 2 3">
    <location>
        <position position="83"/>
    </location>
    <ligand>
        <name>glycerol</name>
        <dbReference type="ChEBI" id="CHEBI:17754"/>
    </ligand>
</feature>
<feature type="binding site" evidence="1">
    <location>
        <position position="83"/>
    </location>
    <ligand>
        <name>sn-glycerol 3-phosphate</name>
        <dbReference type="ChEBI" id="CHEBI:57597"/>
    </ligand>
</feature>
<feature type="binding site" evidence="1 2 3">
    <location>
        <position position="134"/>
    </location>
    <ligand>
        <name>glycerol</name>
        <dbReference type="ChEBI" id="CHEBI:17754"/>
    </ligand>
</feature>
<feature type="binding site" evidence="1">
    <location>
        <position position="134"/>
    </location>
    <ligand>
        <name>sn-glycerol 3-phosphate</name>
        <dbReference type="ChEBI" id="CHEBI:57597"/>
    </ligand>
</feature>
<feature type="binding site" evidence="1 2 3">
    <location>
        <position position="243"/>
    </location>
    <ligand>
        <name>glycerol</name>
        <dbReference type="ChEBI" id="CHEBI:17754"/>
    </ligand>
</feature>
<feature type="binding site" evidence="1">
    <location>
        <position position="243"/>
    </location>
    <ligand>
        <name>sn-glycerol 3-phosphate</name>
        <dbReference type="ChEBI" id="CHEBI:57597"/>
    </ligand>
</feature>
<feature type="binding site" evidence="1 2 3">
    <location>
        <position position="244"/>
    </location>
    <ligand>
        <name>glycerol</name>
        <dbReference type="ChEBI" id="CHEBI:17754"/>
    </ligand>
</feature>
<feature type="binding site" evidence="1">
    <location>
        <position position="265"/>
    </location>
    <ligand>
        <name>ADP</name>
        <dbReference type="ChEBI" id="CHEBI:456216"/>
    </ligand>
</feature>
<feature type="binding site" evidence="1">
    <location>
        <position position="265"/>
    </location>
    <ligand>
        <name>ATP</name>
        <dbReference type="ChEBI" id="CHEBI:30616"/>
    </ligand>
</feature>
<feature type="binding site" evidence="1">
    <location>
        <position position="308"/>
    </location>
    <ligand>
        <name>ADP</name>
        <dbReference type="ChEBI" id="CHEBI:456216"/>
    </ligand>
</feature>
<feature type="binding site" evidence="1">
    <location>
        <position position="308"/>
    </location>
    <ligand>
        <name>ATP</name>
        <dbReference type="ChEBI" id="CHEBI:30616"/>
    </ligand>
</feature>
<feature type="binding site" evidence="1">
    <location>
        <position position="312"/>
    </location>
    <ligand>
        <name>ATP</name>
        <dbReference type="ChEBI" id="CHEBI:30616"/>
    </ligand>
</feature>
<feature type="binding site" evidence="1">
    <location>
        <position position="411"/>
    </location>
    <ligand>
        <name>ADP</name>
        <dbReference type="ChEBI" id="CHEBI:456216"/>
    </ligand>
</feature>
<feature type="binding site" evidence="1">
    <location>
        <position position="411"/>
    </location>
    <ligand>
        <name>ATP</name>
        <dbReference type="ChEBI" id="CHEBI:30616"/>
    </ligand>
</feature>
<feature type="strand" evidence="4">
    <location>
        <begin position="4"/>
        <end position="10"/>
    </location>
</feature>
<feature type="strand" evidence="4">
    <location>
        <begin position="12"/>
        <end position="20"/>
    </location>
</feature>
<feature type="strand" evidence="4">
    <location>
        <begin position="26"/>
        <end position="33"/>
    </location>
</feature>
<feature type="helix" evidence="4">
    <location>
        <begin position="48"/>
        <end position="64"/>
    </location>
</feature>
<feature type="turn" evidence="4">
    <location>
        <begin position="65"/>
        <end position="67"/>
    </location>
</feature>
<feature type="helix" evidence="4">
    <location>
        <begin position="70"/>
        <end position="72"/>
    </location>
</feature>
<feature type="strand" evidence="4">
    <location>
        <begin position="73"/>
        <end position="80"/>
    </location>
</feature>
<feature type="strand" evidence="4">
    <location>
        <begin position="85"/>
        <end position="89"/>
    </location>
</feature>
<feature type="turn" evidence="4">
    <location>
        <begin position="90"/>
        <end position="92"/>
    </location>
</feature>
<feature type="strand" evidence="4">
    <location>
        <begin position="95"/>
        <end position="97"/>
    </location>
</feature>
<feature type="helix" evidence="4">
    <location>
        <begin position="108"/>
        <end position="116"/>
    </location>
</feature>
<feature type="helix" evidence="4">
    <location>
        <begin position="120"/>
        <end position="127"/>
    </location>
</feature>
<feature type="helix" evidence="4">
    <location>
        <begin position="136"/>
        <end position="146"/>
    </location>
</feature>
<feature type="helix" evidence="4">
    <location>
        <begin position="150"/>
        <end position="155"/>
    </location>
</feature>
<feature type="strand" evidence="4">
    <location>
        <begin position="159"/>
        <end position="163"/>
    </location>
</feature>
<feature type="helix" evidence="4">
    <location>
        <begin position="164"/>
        <end position="172"/>
    </location>
</feature>
<feature type="turn" evidence="4">
    <location>
        <begin position="173"/>
        <end position="175"/>
    </location>
</feature>
<feature type="strand" evidence="4">
    <location>
        <begin position="179"/>
        <end position="181"/>
    </location>
</feature>
<feature type="helix" evidence="4">
    <location>
        <begin position="182"/>
        <end position="185"/>
    </location>
</feature>
<feature type="strand" evidence="4">
    <location>
        <begin position="188"/>
        <end position="192"/>
    </location>
</feature>
<feature type="turn" evidence="4">
    <location>
        <begin position="193"/>
        <end position="196"/>
    </location>
</feature>
<feature type="helix" evidence="4">
    <location>
        <begin position="200"/>
        <end position="206"/>
    </location>
</feature>
<feature type="helix" evidence="4">
    <location>
        <begin position="210"/>
        <end position="212"/>
    </location>
</feature>
<feature type="strand" evidence="4">
    <location>
        <begin position="215"/>
        <end position="217"/>
    </location>
</feature>
<feature type="strand" evidence="4">
    <location>
        <begin position="219"/>
        <end position="221"/>
    </location>
</feature>
<feature type="helix" evidence="4">
    <location>
        <begin position="228"/>
        <end position="231"/>
    </location>
</feature>
<feature type="strand" evidence="4">
    <location>
        <begin position="236"/>
        <end position="240"/>
    </location>
</feature>
<feature type="helix" evidence="4">
    <location>
        <begin position="243"/>
        <end position="250"/>
    </location>
</feature>
<feature type="strand" evidence="4">
    <location>
        <begin position="259"/>
        <end position="272"/>
    </location>
</feature>
<feature type="strand" evidence="4">
    <location>
        <begin position="281"/>
        <end position="283"/>
    </location>
</feature>
<feature type="strand" evidence="4">
    <location>
        <begin position="285"/>
        <end position="292"/>
    </location>
</feature>
<feature type="strand" evidence="4">
    <location>
        <begin position="295"/>
        <end position="305"/>
    </location>
</feature>
<feature type="helix" evidence="4">
    <location>
        <begin position="308"/>
        <end position="316"/>
    </location>
</feature>
<feature type="helix" evidence="4">
    <location>
        <begin position="328"/>
        <end position="332"/>
    </location>
</feature>
<feature type="strand" evidence="4">
    <location>
        <begin position="341"/>
        <end position="343"/>
    </location>
</feature>
<feature type="turn" evidence="4">
    <location>
        <begin position="351"/>
        <end position="353"/>
    </location>
</feature>
<feature type="strand" evidence="4">
    <location>
        <begin position="361"/>
        <end position="365"/>
    </location>
</feature>
<feature type="helix" evidence="4">
    <location>
        <begin position="371"/>
        <end position="396"/>
    </location>
</feature>
<feature type="strand" evidence="4">
    <location>
        <begin position="406"/>
        <end position="410"/>
    </location>
</feature>
<feature type="helix" evidence="4">
    <location>
        <begin position="411"/>
        <end position="414"/>
    </location>
</feature>
<feature type="helix" evidence="4">
    <location>
        <begin position="416"/>
        <end position="426"/>
    </location>
</feature>
<feature type="strand" evidence="4">
    <location>
        <begin position="430"/>
        <end position="434"/>
    </location>
</feature>
<feature type="helix" evidence="4">
    <location>
        <begin position="438"/>
        <end position="451"/>
    </location>
</feature>
<feature type="helix" evidence="4">
    <location>
        <begin position="457"/>
        <end position="462"/>
    </location>
</feature>
<feature type="strand" evidence="4">
    <location>
        <begin position="466"/>
        <end position="470"/>
    </location>
</feature>
<feature type="helix" evidence="4">
    <location>
        <begin position="476"/>
        <end position="494"/>
    </location>
</feature>
<reference key="1">
    <citation type="journal article" date="2001" name="Proc. Natl. Acad. Sci. U.S.A.">
        <title>The complete sequence of the 1,683-kb pSymB megaplasmid from the N2-fixing endosymbiont Sinorhizobium meliloti.</title>
        <authorList>
            <person name="Finan T.M."/>
            <person name="Weidner S."/>
            <person name="Wong K."/>
            <person name="Buhrmester J."/>
            <person name="Chain P."/>
            <person name="Vorhoelter F.J."/>
            <person name="Hernandez-Lucas I."/>
            <person name="Becker A."/>
            <person name="Cowie A."/>
            <person name="Gouzy J."/>
            <person name="Golding B."/>
            <person name="Puehler A."/>
        </authorList>
    </citation>
    <scope>NUCLEOTIDE SEQUENCE [LARGE SCALE GENOMIC DNA]</scope>
    <source>
        <strain>1021</strain>
    </source>
</reference>
<reference key="2">
    <citation type="journal article" date="2001" name="Science">
        <title>The composite genome of the legume symbiont Sinorhizobium meliloti.</title>
        <authorList>
            <person name="Galibert F."/>
            <person name="Finan T.M."/>
            <person name="Long S.R."/>
            <person name="Puehler A."/>
            <person name="Abola P."/>
            <person name="Ampe F."/>
            <person name="Barloy-Hubler F."/>
            <person name="Barnett M.J."/>
            <person name="Becker A."/>
            <person name="Boistard P."/>
            <person name="Bothe G."/>
            <person name="Boutry M."/>
            <person name="Bowser L."/>
            <person name="Buhrmester J."/>
            <person name="Cadieu E."/>
            <person name="Capela D."/>
            <person name="Chain P."/>
            <person name="Cowie A."/>
            <person name="Davis R.W."/>
            <person name="Dreano S."/>
            <person name="Federspiel N.A."/>
            <person name="Fisher R.F."/>
            <person name="Gloux S."/>
            <person name="Godrie T."/>
            <person name="Goffeau A."/>
            <person name="Golding B."/>
            <person name="Gouzy J."/>
            <person name="Gurjal M."/>
            <person name="Hernandez-Lucas I."/>
            <person name="Hong A."/>
            <person name="Huizar L."/>
            <person name="Hyman R.W."/>
            <person name="Jones T."/>
            <person name="Kahn D."/>
            <person name="Kahn M.L."/>
            <person name="Kalman S."/>
            <person name="Keating D.H."/>
            <person name="Kiss E."/>
            <person name="Komp C."/>
            <person name="Lelaure V."/>
            <person name="Masuy D."/>
            <person name="Palm C."/>
            <person name="Peck M.C."/>
            <person name="Pohl T.M."/>
            <person name="Portetelle D."/>
            <person name="Purnelle B."/>
            <person name="Ramsperger U."/>
            <person name="Surzycki R."/>
            <person name="Thebault P."/>
            <person name="Vandenbol M."/>
            <person name="Vorhoelter F.J."/>
            <person name="Weidner S."/>
            <person name="Wells D.H."/>
            <person name="Wong K."/>
            <person name="Yeh K.-C."/>
            <person name="Batut J."/>
        </authorList>
    </citation>
    <scope>NUCLEOTIDE SEQUENCE [LARGE SCALE GENOMIC DNA]</scope>
    <source>
        <strain>1021</strain>
    </source>
</reference>
<reference key="3">
    <citation type="journal article" date="1999" name="J. Bacteriol.">
        <title>Poly-3-hydroxybutyrate degradation in Rhizobium (Sinorhizobium) meliloti: isolation and characterization of a gene encoding 3-hydroxybutyrate dehydrogenase.</title>
        <authorList>
            <person name="Aneja P."/>
            <person name="Charles T.C."/>
        </authorList>
    </citation>
    <scope>NUCLEOTIDE SEQUENCE [GENOMIC DNA] OF 1-59</scope>
    <source>
        <strain>SU47 / 1021</strain>
    </source>
</reference>
<reference evidence="3" key="4">
    <citation type="submission" date="2012-03" db="PDB data bank">
        <title>Crystal structure of glycerol kinase in complex with glycerol from Sinorhizobium meliloti 1021.</title>
        <authorList>
            <consortium name="New York structural genomics research consortium (NYSGRC)"/>
        </authorList>
    </citation>
    <scope>X-RAY CRYSTALLOGRAPHY (2.33 ANGSTROMS) IN COMPLEX WITH GLYCEROL</scope>
</reference>
<name>GLPK_RHIME</name>
<organism>
    <name type="scientific">Rhizobium meliloti (strain 1021)</name>
    <name type="common">Ensifer meliloti</name>
    <name type="synonym">Sinorhizobium meliloti</name>
    <dbReference type="NCBI Taxonomy" id="266834"/>
    <lineage>
        <taxon>Bacteria</taxon>
        <taxon>Pseudomonadati</taxon>
        <taxon>Pseudomonadota</taxon>
        <taxon>Alphaproteobacteria</taxon>
        <taxon>Hyphomicrobiales</taxon>
        <taxon>Rhizobiaceae</taxon>
        <taxon>Sinorhizobium/Ensifer group</taxon>
        <taxon>Sinorhizobium</taxon>
    </lineage>
</organism>
<protein>
    <recommendedName>
        <fullName evidence="1">Glycerol kinase</fullName>
        <ecNumber evidence="1">2.7.1.30</ecNumber>
    </recommendedName>
    <alternativeName>
        <fullName evidence="1">ATP:glycerol 3-phosphotransferase</fullName>
    </alternativeName>
    <alternativeName>
        <fullName evidence="1">Glycerokinase</fullName>
        <shortName evidence="1">GK</shortName>
    </alternativeName>
</protein>
<keyword id="KW-0002">3D-structure</keyword>
<keyword id="KW-0067">ATP-binding</keyword>
<keyword id="KW-0319">Glycerol metabolism</keyword>
<keyword id="KW-0418">Kinase</keyword>
<keyword id="KW-0547">Nucleotide-binding</keyword>
<keyword id="KW-0614">Plasmid</keyword>
<keyword id="KW-1185">Reference proteome</keyword>
<keyword id="KW-0808">Transferase</keyword>
<proteinExistence type="evidence at protein level"/>
<comment type="function">
    <text evidence="1">Key enzyme in the regulation of glycerol uptake and metabolism. Catalyzes the phosphorylation of glycerol to yield sn-glycerol 3-phosphate.</text>
</comment>
<comment type="catalytic activity">
    <reaction evidence="1">
        <text>glycerol + ATP = sn-glycerol 3-phosphate + ADP + H(+)</text>
        <dbReference type="Rhea" id="RHEA:21644"/>
        <dbReference type="ChEBI" id="CHEBI:15378"/>
        <dbReference type="ChEBI" id="CHEBI:17754"/>
        <dbReference type="ChEBI" id="CHEBI:30616"/>
        <dbReference type="ChEBI" id="CHEBI:57597"/>
        <dbReference type="ChEBI" id="CHEBI:456216"/>
        <dbReference type="EC" id="2.7.1.30"/>
    </reaction>
</comment>
<comment type="activity regulation">
    <text evidence="1">Inhibited by fructose 1,6-bisphosphate (FBP).</text>
</comment>
<comment type="pathway">
    <text evidence="1">Polyol metabolism; glycerol degradation via glycerol kinase pathway; sn-glycerol 3-phosphate from glycerol: step 1/1.</text>
</comment>
<comment type="similarity">
    <text evidence="1">Belongs to the FGGY kinase family.</text>
</comment>
<accession>O86033</accession>
<sequence>MGGYILAIDQGTTSTRAIVFDGNQKIAGVGQKEFKQHFPKSGWVEHDPEEIWQTVVSTVKEAIEKSGITANDIAAIGITNQRETVVVWDRETGKPIHNAIVWQDRRTAAFCDKLKKKGLEKTFVKKTGLLLDPYFSGTKLNWLLSNVKGAQVRAAKGELCFGTIDTFLIWRLTGGECFCTDATNASRTLLYNIAENAWDDELTEVLRVPKEMLPEVKDCAADFGVTDPSLFGAAIPILGVAGDQQAATIGQACFKPGMLKSTYGTGCFALLNTGKDMVRSKNRLLTTIAYRLDGETTYALEGSIFVAGAAVQWLRDGLKVIKAAPDTGSLAESADPSQEVYLVPAFTGLGAPHWDPDARGAIFGMTRNTGPAEFARAALEAVCYQTRDLLEAMHKDWRRNGNDTVLRVDGGMVASDWTMQRLSDLLDAPVDRPVILETTALGVAWLAGSRAGVWPNQEAFAKSWARDRRFEPHMDEATRKVKLKGWRSAVKRTLIAA</sequence>
<gene>
    <name evidence="1" type="primary">glpK</name>
    <name type="ordered locus">RB1135</name>
    <name type="ORF">SMb21009</name>
</gene>
<geneLocation type="plasmid">
    <name>pSymB</name>
    <name>megaplasmid 2</name>
</geneLocation>